<organism>
    <name type="scientific">Rickettsia prowazekii (strain Madrid E)</name>
    <dbReference type="NCBI Taxonomy" id="272947"/>
    <lineage>
        <taxon>Bacteria</taxon>
        <taxon>Pseudomonadati</taxon>
        <taxon>Pseudomonadota</taxon>
        <taxon>Alphaproteobacteria</taxon>
        <taxon>Rickettsiales</taxon>
        <taxon>Rickettsiaceae</taxon>
        <taxon>Rickettsieae</taxon>
        <taxon>Rickettsia</taxon>
        <taxon>typhus group</taxon>
    </lineage>
</organism>
<comment type="function">
    <text evidence="1">One of the primary rRNA binding proteins, it binds directly near the 3'-end of the 23S rRNA, where it nucleates assembly of the 50S subunit.</text>
</comment>
<comment type="subunit">
    <text evidence="1">Part of the 50S ribosomal subunit. Forms a cluster with proteins L14 and L19.</text>
</comment>
<comment type="PTM">
    <text evidence="1">Methylated by PrmB.</text>
</comment>
<comment type="similarity">
    <text evidence="1">Belongs to the universal ribosomal protein uL3 family.</text>
</comment>
<accession>P48952</accession>
<sequence>MRTGIIAQKVGMTSVFNDKGERISLTLVKVDDCQVVGHKTLAKHGYNALVIGVKDQKISKVTKPMKQVFANAKIAPKTKLKEFRISEDNFIDIASILEVDHFRVGQFVDITATTIGKGFAGSMKRHNFRGLEASHGVSISHRSHGSTGQRQDPGKVFKGKKMAGHMGCNKVTIQNLKIFAVDTNRKLIMIQGSIPGHKNSYLLVKDAIKKAAITIA</sequence>
<proteinExistence type="inferred from homology"/>
<gene>
    <name evidence="1" type="primary">rplC</name>
    <name type="ordered locus">RP659</name>
</gene>
<protein>
    <recommendedName>
        <fullName evidence="1">Large ribosomal subunit protein uL3</fullName>
    </recommendedName>
    <alternativeName>
        <fullName evidence="3">50S ribosomal protein L3</fullName>
    </alternativeName>
</protein>
<dbReference type="EMBL" id="AJ235272">
    <property type="protein sequence ID" value="CAA15099.1"/>
    <property type="molecule type" value="Genomic_DNA"/>
</dbReference>
<dbReference type="EMBL" id="Z54170">
    <property type="protein sequence ID" value="CAA90883.1"/>
    <property type="molecule type" value="Genomic_DNA"/>
</dbReference>
<dbReference type="PIR" id="A71672">
    <property type="entry name" value="A71672"/>
</dbReference>
<dbReference type="RefSeq" id="NP_221023.1">
    <property type="nucleotide sequence ID" value="NC_000963.1"/>
</dbReference>
<dbReference type="RefSeq" id="WP_004596199.1">
    <property type="nucleotide sequence ID" value="NC_000963.1"/>
</dbReference>
<dbReference type="SMR" id="P48952"/>
<dbReference type="STRING" id="272947.gene:17555736"/>
<dbReference type="EnsemblBacteria" id="CAA15099">
    <property type="protein sequence ID" value="CAA15099"/>
    <property type="gene ID" value="CAA15099"/>
</dbReference>
<dbReference type="GeneID" id="57569784"/>
<dbReference type="KEGG" id="rpr:RP659"/>
<dbReference type="PATRIC" id="fig|272947.5.peg.681"/>
<dbReference type="eggNOG" id="COG0087">
    <property type="taxonomic scope" value="Bacteria"/>
</dbReference>
<dbReference type="HOGENOM" id="CLU_044142_2_0_5"/>
<dbReference type="OrthoDB" id="9806135at2"/>
<dbReference type="Proteomes" id="UP000002480">
    <property type="component" value="Chromosome"/>
</dbReference>
<dbReference type="GO" id="GO:1990904">
    <property type="term" value="C:ribonucleoprotein complex"/>
    <property type="evidence" value="ECO:0007669"/>
    <property type="project" value="UniProtKB-KW"/>
</dbReference>
<dbReference type="GO" id="GO:0005840">
    <property type="term" value="C:ribosome"/>
    <property type="evidence" value="ECO:0007669"/>
    <property type="project" value="UniProtKB-KW"/>
</dbReference>
<dbReference type="GO" id="GO:0019843">
    <property type="term" value="F:rRNA binding"/>
    <property type="evidence" value="ECO:0007669"/>
    <property type="project" value="UniProtKB-UniRule"/>
</dbReference>
<dbReference type="GO" id="GO:0003735">
    <property type="term" value="F:structural constituent of ribosome"/>
    <property type="evidence" value="ECO:0007669"/>
    <property type="project" value="InterPro"/>
</dbReference>
<dbReference type="GO" id="GO:0006412">
    <property type="term" value="P:translation"/>
    <property type="evidence" value="ECO:0007669"/>
    <property type="project" value="UniProtKB-UniRule"/>
</dbReference>
<dbReference type="FunFam" id="2.40.30.10:FF:000004">
    <property type="entry name" value="50S ribosomal protein L3"/>
    <property type="match status" value="1"/>
</dbReference>
<dbReference type="Gene3D" id="3.30.160.810">
    <property type="match status" value="1"/>
</dbReference>
<dbReference type="Gene3D" id="2.40.30.10">
    <property type="entry name" value="Translation factors"/>
    <property type="match status" value="1"/>
</dbReference>
<dbReference type="HAMAP" id="MF_01325_B">
    <property type="entry name" value="Ribosomal_uL3_B"/>
    <property type="match status" value="1"/>
</dbReference>
<dbReference type="InterPro" id="IPR000597">
    <property type="entry name" value="Ribosomal_uL3"/>
</dbReference>
<dbReference type="InterPro" id="IPR019927">
    <property type="entry name" value="Ribosomal_uL3_bac/org-type"/>
</dbReference>
<dbReference type="InterPro" id="IPR019926">
    <property type="entry name" value="Ribosomal_uL3_CS"/>
</dbReference>
<dbReference type="InterPro" id="IPR009000">
    <property type="entry name" value="Transl_B-barrel_sf"/>
</dbReference>
<dbReference type="NCBIfam" id="TIGR03625">
    <property type="entry name" value="L3_bact"/>
    <property type="match status" value="1"/>
</dbReference>
<dbReference type="PANTHER" id="PTHR11229">
    <property type="entry name" value="50S RIBOSOMAL PROTEIN L3"/>
    <property type="match status" value="1"/>
</dbReference>
<dbReference type="PANTHER" id="PTHR11229:SF16">
    <property type="entry name" value="LARGE RIBOSOMAL SUBUNIT PROTEIN UL3C"/>
    <property type="match status" value="1"/>
</dbReference>
<dbReference type="Pfam" id="PF00297">
    <property type="entry name" value="Ribosomal_L3"/>
    <property type="match status" value="1"/>
</dbReference>
<dbReference type="SUPFAM" id="SSF50447">
    <property type="entry name" value="Translation proteins"/>
    <property type="match status" value="1"/>
</dbReference>
<dbReference type="PROSITE" id="PS00474">
    <property type="entry name" value="RIBOSOMAL_L3"/>
    <property type="match status" value="1"/>
</dbReference>
<keyword id="KW-0488">Methylation</keyword>
<keyword id="KW-1185">Reference proteome</keyword>
<keyword id="KW-0687">Ribonucleoprotein</keyword>
<keyword id="KW-0689">Ribosomal protein</keyword>
<keyword id="KW-0694">RNA-binding</keyword>
<keyword id="KW-0699">rRNA-binding</keyword>
<reference key="1">
    <citation type="journal article" date="1998" name="Nature">
        <title>The genome sequence of Rickettsia prowazekii and the origin of mitochondria.</title>
        <authorList>
            <person name="Andersson S.G.E."/>
            <person name="Zomorodipour A."/>
            <person name="Andersson J.O."/>
            <person name="Sicheritz-Ponten T."/>
            <person name="Alsmark U.C.M."/>
            <person name="Podowski R.M."/>
            <person name="Naeslund A.K."/>
            <person name="Eriksson A.-S."/>
            <person name="Winkler H.H."/>
            <person name="Kurland C.G."/>
        </authorList>
    </citation>
    <scope>NUCLEOTIDE SEQUENCE [LARGE SCALE GENOMIC DNA]</scope>
    <source>
        <strain>Madrid E</strain>
    </source>
</reference>
<reference key="2">
    <citation type="journal article" date="1996" name="J. Bacteriol.">
        <title>A chimeric disposition of the elongation factor genes in Rickettsia prowazekii.</title>
        <authorList>
            <person name="Syvaenen A.-C."/>
            <person name="Amiri H."/>
            <person name="Jamal A."/>
            <person name="Andersson S.G.E."/>
            <person name="Kurland C.G."/>
        </authorList>
    </citation>
    <scope>NUCLEOTIDE SEQUENCE [GENOMIC DNA] OF 1-23</scope>
    <source>
        <strain>Madrid E</strain>
    </source>
</reference>
<evidence type="ECO:0000255" key="1">
    <source>
        <dbReference type="HAMAP-Rule" id="MF_01325"/>
    </source>
</evidence>
<evidence type="ECO:0000256" key="2">
    <source>
        <dbReference type="SAM" id="MobiDB-lite"/>
    </source>
</evidence>
<evidence type="ECO:0000305" key="3"/>
<name>RL3_RICPR</name>
<feature type="chain" id="PRO_0000077147" description="Large ribosomal subunit protein uL3">
    <location>
        <begin position="1"/>
        <end position="216"/>
    </location>
</feature>
<feature type="region of interest" description="Disordered" evidence="2">
    <location>
        <begin position="136"/>
        <end position="155"/>
    </location>
</feature>
<feature type="modified residue" description="N5-methylglutamine" evidence="1">
    <location>
        <position position="151"/>
    </location>
</feature>